<reference key="1">
    <citation type="submission" date="2008-02" db="EMBL/GenBank/DDBJ databases">
        <title>Complete sequence of Synechococcus sp. PCC 7002.</title>
        <authorList>
            <person name="Li T."/>
            <person name="Zhao J."/>
            <person name="Zhao C."/>
            <person name="Liu Z."/>
            <person name="Zhao F."/>
            <person name="Marquardt J."/>
            <person name="Nomura C.T."/>
            <person name="Persson S."/>
            <person name="Detter J.C."/>
            <person name="Richardson P.M."/>
            <person name="Lanz C."/>
            <person name="Schuster S.C."/>
            <person name="Wang J."/>
            <person name="Li S."/>
            <person name="Huang X."/>
            <person name="Cai T."/>
            <person name="Yu Z."/>
            <person name="Luo J."/>
            <person name="Zhao J."/>
            <person name="Bryant D.A."/>
        </authorList>
    </citation>
    <scope>NUCLEOTIDE SEQUENCE [LARGE SCALE GENOMIC DNA]</scope>
    <source>
        <strain>ATCC 27264 / PCC 7002 / PR-6</strain>
    </source>
</reference>
<dbReference type="EC" id="1.17.7.4" evidence="1"/>
<dbReference type="EMBL" id="CP000951">
    <property type="protein sequence ID" value="ACA98524.1"/>
    <property type="molecule type" value="Genomic_DNA"/>
</dbReference>
<dbReference type="RefSeq" id="WP_012306148.1">
    <property type="nucleotide sequence ID" value="NZ_JAHHPU010000001.1"/>
</dbReference>
<dbReference type="SMR" id="B1XPG7"/>
<dbReference type="STRING" id="32049.SYNPCC7002_A0517"/>
<dbReference type="KEGG" id="syp:SYNPCC7002_A0517"/>
<dbReference type="eggNOG" id="COG0761">
    <property type="taxonomic scope" value="Bacteria"/>
</dbReference>
<dbReference type="HOGENOM" id="CLU_027486_4_0_3"/>
<dbReference type="UniPathway" id="UPA00056">
    <property type="reaction ID" value="UER00097"/>
</dbReference>
<dbReference type="UniPathway" id="UPA00059">
    <property type="reaction ID" value="UER00105"/>
</dbReference>
<dbReference type="Proteomes" id="UP000001688">
    <property type="component" value="Chromosome"/>
</dbReference>
<dbReference type="GO" id="GO:0051539">
    <property type="term" value="F:4 iron, 4 sulfur cluster binding"/>
    <property type="evidence" value="ECO:0007669"/>
    <property type="project" value="UniProtKB-UniRule"/>
</dbReference>
<dbReference type="GO" id="GO:0051745">
    <property type="term" value="F:4-hydroxy-3-methylbut-2-enyl diphosphate reductase activity"/>
    <property type="evidence" value="ECO:0007669"/>
    <property type="project" value="UniProtKB-UniRule"/>
</dbReference>
<dbReference type="GO" id="GO:0046872">
    <property type="term" value="F:metal ion binding"/>
    <property type="evidence" value="ECO:0007669"/>
    <property type="project" value="UniProtKB-KW"/>
</dbReference>
<dbReference type="GO" id="GO:0050992">
    <property type="term" value="P:dimethylallyl diphosphate biosynthetic process"/>
    <property type="evidence" value="ECO:0007669"/>
    <property type="project" value="UniProtKB-UniRule"/>
</dbReference>
<dbReference type="GO" id="GO:0019288">
    <property type="term" value="P:isopentenyl diphosphate biosynthetic process, methylerythritol 4-phosphate pathway"/>
    <property type="evidence" value="ECO:0007669"/>
    <property type="project" value="UniProtKB-UniRule"/>
</dbReference>
<dbReference type="GO" id="GO:0016114">
    <property type="term" value="P:terpenoid biosynthetic process"/>
    <property type="evidence" value="ECO:0007669"/>
    <property type="project" value="UniProtKB-UniRule"/>
</dbReference>
<dbReference type="CDD" id="cd13944">
    <property type="entry name" value="lytB_ispH"/>
    <property type="match status" value="1"/>
</dbReference>
<dbReference type="Gene3D" id="3.40.50.11270">
    <property type="match status" value="1"/>
</dbReference>
<dbReference type="Gene3D" id="3.40.1010.20">
    <property type="entry name" value="4-hydroxy-3-methylbut-2-enyl diphosphate reductase, catalytic domain"/>
    <property type="match status" value="2"/>
</dbReference>
<dbReference type="HAMAP" id="MF_00191">
    <property type="entry name" value="IspH"/>
    <property type="match status" value="1"/>
</dbReference>
<dbReference type="InterPro" id="IPR003451">
    <property type="entry name" value="LytB/IspH"/>
</dbReference>
<dbReference type="NCBIfam" id="TIGR00216">
    <property type="entry name" value="ispH_lytB"/>
    <property type="match status" value="1"/>
</dbReference>
<dbReference type="NCBIfam" id="NF009911">
    <property type="entry name" value="PRK13371.1"/>
    <property type="match status" value="1"/>
</dbReference>
<dbReference type="PANTHER" id="PTHR31619">
    <property type="entry name" value="4-HYDROXY-3-METHYLBUT-2-ENYL DIPHOSPHATE REDUCTASE, CHLOROPLASTIC"/>
    <property type="match status" value="1"/>
</dbReference>
<dbReference type="PANTHER" id="PTHR31619:SF5">
    <property type="entry name" value="4-HYDROXY-3-METHYLBUT-2-ENYL DIPHOSPHATE REDUCTASE, CHLOROPLASTIC"/>
    <property type="match status" value="1"/>
</dbReference>
<dbReference type="Pfam" id="PF02401">
    <property type="entry name" value="LYTB"/>
    <property type="match status" value="1"/>
</dbReference>
<accession>B1XPG7</accession>
<protein>
    <recommendedName>
        <fullName evidence="1">4-hydroxy-3-methylbut-2-enyl diphosphate reductase</fullName>
        <shortName evidence="1">HMBPP reductase</shortName>
        <ecNumber evidence="1">1.17.7.4</ecNumber>
    </recommendedName>
</protein>
<evidence type="ECO:0000255" key="1">
    <source>
        <dbReference type="HAMAP-Rule" id="MF_00191"/>
    </source>
</evidence>
<organism>
    <name type="scientific">Picosynechococcus sp. (strain ATCC 27264 / PCC 7002 / PR-6)</name>
    <name type="common">Agmenellum quadruplicatum</name>
    <dbReference type="NCBI Taxonomy" id="32049"/>
    <lineage>
        <taxon>Bacteria</taxon>
        <taxon>Bacillati</taxon>
        <taxon>Cyanobacteriota</taxon>
        <taxon>Cyanophyceae</taxon>
        <taxon>Oscillatoriophycideae</taxon>
        <taxon>Chroococcales</taxon>
        <taxon>Geminocystaceae</taxon>
        <taxon>Picosynechococcus</taxon>
    </lineage>
</organism>
<gene>
    <name evidence="1" type="primary">ispH</name>
    <name type="ordered locus">SYNPCC7002_A0517</name>
</gene>
<proteinExistence type="inferred from homology"/>
<sequence length="403" mass="45454">MDTKAFKRSLNHSENYYRQGFGHKDEVAGMMTSEYQSSLIQEIRDNNYELTRGDVTIYLAEAFGFCWGVERAVAMAYETRKHFPTEKIWVTNEIIHNPSVNNRLKEMNVHFIEVVDGDKDFSGVANGDVVILPAFGATVQEMQLLNDRGCTIVDTTCPWVSKVWNSVEKHKKKNYTSIIHGKYKHEETVATSSFAGTYLVLLNLEEAEYVRNYILHGGDRQTFLDKFKNAYSEGFDPDKDLDRVGVANQTTMLKSETEQMGKLFEQTMLEKFGPTEINDHFMSFNTICDATQERQDAMFDLVEKDLDLMVVIGGFNSSNTTHLQEIAVERNIPSYHIDSGDRLLGNNVIAHKPLDGEITTQTHWLPAGKLKIGVTSGASTPDKVVEDVIAKIFAEKAQPAALV</sequence>
<name>ISPH_PICP2</name>
<keyword id="KW-0004">4Fe-4S</keyword>
<keyword id="KW-0408">Iron</keyword>
<keyword id="KW-0411">Iron-sulfur</keyword>
<keyword id="KW-0414">Isoprene biosynthesis</keyword>
<keyword id="KW-0479">Metal-binding</keyword>
<keyword id="KW-0560">Oxidoreductase</keyword>
<keyword id="KW-1185">Reference proteome</keyword>
<comment type="function">
    <text evidence="1">Catalyzes the conversion of 1-hydroxy-2-methyl-2-(E)-butenyl 4-diphosphate (HMBPP) into a mixture of isopentenyl diphosphate (IPP) and dimethylallyl diphosphate (DMAPP). Acts in the terminal step of the DOXP/MEP pathway for isoprenoid precursor biosynthesis.</text>
</comment>
<comment type="catalytic activity">
    <reaction evidence="1">
        <text>isopentenyl diphosphate + 2 oxidized [2Fe-2S]-[ferredoxin] + H2O = (2E)-4-hydroxy-3-methylbut-2-enyl diphosphate + 2 reduced [2Fe-2S]-[ferredoxin] + 2 H(+)</text>
        <dbReference type="Rhea" id="RHEA:24488"/>
        <dbReference type="Rhea" id="RHEA-COMP:10000"/>
        <dbReference type="Rhea" id="RHEA-COMP:10001"/>
        <dbReference type="ChEBI" id="CHEBI:15377"/>
        <dbReference type="ChEBI" id="CHEBI:15378"/>
        <dbReference type="ChEBI" id="CHEBI:33737"/>
        <dbReference type="ChEBI" id="CHEBI:33738"/>
        <dbReference type="ChEBI" id="CHEBI:128753"/>
        <dbReference type="ChEBI" id="CHEBI:128769"/>
        <dbReference type="EC" id="1.17.7.4"/>
    </reaction>
</comment>
<comment type="catalytic activity">
    <reaction evidence="1">
        <text>dimethylallyl diphosphate + 2 oxidized [2Fe-2S]-[ferredoxin] + H2O = (2E)-4-hydroxy-3-methylbut-2-enyl diphosphate + 2 reduced [2Fe-2S]-[ferredoxin] + 2 H(+)</text>
        <dbReference type="Rhea" id="RHEA:24825"/>
        <dbReference type="Rhea" id="RHEA-COMP:10000"/>
        <dbReference type="Rhea" id="RHEA-COMP:10001"/>
        <dbReference type="ChEBI" id="CHEBI:15377"/>
        <dbReference type="ChEBI" id="CHEBI:15378"/>
        <dbReference type="ChEBI" id="CHEBI:33737"/>
        <dbReference type="ChEBI" id="CHEBI:33738"/>
        <dbReference type="ChEBI" id="CHEBI:57623"/>
        <dbReference type="ChEBI" id="CHEBI:128753"/>
        <dbReference type="EC" id="1.17.7.4"/>
    </reaction>
</comment>
<comment type="cofactor">
    <cofactor evidence="1">
        <name>[4Fe-4S] cluster</name>
        <dbReference type="ChEBI" id="CHEBI:49883"/>
    </cofactor>
    <text evidence="1">Binds 1 [4Fe-4S] cluster per subunit.</text>
</comment>
<comment type="pathway">
    <text evidence="1">Isoprenoid biosynthesis; dimethylallyl diphosphate biosynthesis; dimethylallyl diphosphate from (2E)-4-hydroxy-3-methylbutenyl diphosphate: step 1/1.</text>
</comment>
<comment type="pathway">
    <text evidence="1">Isoprenoid biosynthesis; isopentenyl diphosphate biosynthesis via DXP pathway; isopentenyl diphosphate from 1-deoxy-D-xylulose 5-phosphate: step 6/6.</text>
</comment>
<comment type="similarity">
    <text evidence="1">Belongs to the IspH family.</text>
</comment>
<feature type="chain" id="PRO_1000098981" description="4-hydroxy-3-methylbut-2-enyl diphosphate reductase">
    <location>
        <begin position="1"/>
        <end position="403"/>
    </location>
</feature>
<feature type="active site" description="Proton donor" evidence="1">
    <location>
        <position position="187"/>
    </location>
</feature>
<feature type="binding site" evidence="1">
    <location>
        <position position="66"/>
    </location>
    <ligand>
        <name>[4Fe-4S] cluster</name>
        <dbReference type="ChEBI" id="CHEBI:49883"/>
    </ligand>
</feature>
<feature type="binding site" evidence="1">
    <location>
        <position position="96"/>
    </location>
    <ligand>
        <name>(2E)-4-hydroxy-3-methylbut-2-enyl diphosphate</name>
        <dbReference type="ChEBI" id="CHEBI:128753"/>
    </ligand>
</feature>
<feature type="binding site" evidence="1">
    <location>
        <position position="96"/>
    </location>
    <ligand>
        <name>dimethylallyl diphosphate</name>
        <dbReference type="ChEBI" id="CHEBI:57623"/>
    </ligand>
</feature>
<feature type="binding site" evidence="1">
    <location>
        <position position="96"/>
    </location>
    <ligand>
        <name>isopentenyl diphosphate</name>
        <dbReference type="ChEBI" id="CHEBI:128769"/>
    </ligand>
</feature>
<feature type="binding site" evidence="1">
    <location>
        <position position="157"/>
    </location>
    <ligand>
        <name>[4Fe-4S] cluster</name>
        <dbReference type="ChEBI" id="CHEBI:49883"/>
    </ligand>
</feature>
<feature type="binding site" evidence="1">
    <location>
        <position position="185"/>
    </location>
    <ligand>
        <name>(2E)-4-hydroxy-3-methylbut-2-enyl diphosphate</name>
        <dbReference type="ChEBI" id="CHEBI:128753"/>
    </ligand>
</feature>
<feature type="binding site" evidence="1">
    <location>
        <position position="185"/>
    </location>
    <ligand>
        <name>dimethylallyl diphosphate</name>
        <dbReference type="ChEBI" id="CHEBI:57623"/>
    </ligand>
</feature>
<feature type="binding site" evidence="1">
    <location>
        <position position="185"/>
    </location>
    <ligand>
        <name>isopentenyl diphosphate</name>
        <dbReference type="ChEBI" id="CHEBI:128769"/>
    </ligand>
</feature>
<feature type="binding site" evidence="1">
    <location>
        <position position="250"/>
    </location>
    <ligand>
        <name>(2E)-4-hydroxy-3-methylbut-2-enyl diphosphate</name>
        <dbReference type="ChEBI" id="CHEBI:128753"/>
    </ligand>
</feature>
<feature type="binding site" evidence="1">
    <location>
        <position position="288"/>
    </location>
    <ligand>
        <name>[4Fe-4S] cluster</name>
        <dbReference type="ChEBI" id="CHEBI:49883"/>
    </ligand>
</feature>
<feature type="binding site" evidence="1">
    <location>
        <position position="317"/>
    </location>
    <ligand>
        <name>(2E)-4-hydroxy-3-methylbut-2-enyl diphosphate</name>
        <dbReference type="ChEBI" id="CHEBI:128753"/>
    </ligand>
</feature>
<feature type="binding site" evidence="1">
    <location>
        <position position="317"/>
    </location>
    <ligand>
        <name>dimethylallyl diphosphate</name>
        <dbReference type="ChEBI" id="CHEBI:57623"/>
    </ligand>
</feature>
<feature type="binding site" evidence="1">
    <location>
        <position position="317"/>
    </location>
    <ligand>
        <name>isopentenyl diphosphate</name>
        <dbReference type="ChEBI" id="CHEBI:128769"/>
    </ligand>
</feature>
<feature type="binding site" evidence="1">
    <location>
        <position position="318"/>
    </location>
    <ligand>
        <name>(2E)-4-hydroxy-3-methylbut-2-enyl diphosphate</name>
        <dbReference type="ChEBI" id="CHEBI:128753"/>
    </ligand>
</feature>
<feature type="binding site" evidence="1">
    <location>
        <position position="318"/>
    </location>
    <ligand>
        <name>dimethylallyl diphosphate</name>
        <dbReference type="ChEBI" id="CHEBI:57623"/>
    </ligand>
</feature>
<feature type="binding site" evidence="1">
    <location>
        <position position="318"/>
    </location>
    <ligand>
        <name>isopentenyl diphosphate</name>
        <dbReference type="ChEBI" id="CHEBI:128769"/>
    </ligand>
</feature>
<feature type="binding site" evidence="1">
    <location>
        <position position="319"/>
    </location>
    <ligand>
        <name>(2E)-4-hydroxy-3-methylbut-2-enyl diphosphate</name>
        <dbReference type="ChEBI" id="CHEBI:128753"/>
    </ligand>
</feature>
<feature type="binding site" evidence="1">
    <location>
        <position position="319"/>
    </location>
    <ligand>
        <name>dimethylallyl diphosphate</name>
        <dbReference type="ChEBI" id="CHEBI:57623"/>
    </ligand>
</feature>
<feature type="binding site" evidence="1">
    <location>
        <position position="319"/>
    </location>
    <ligand>
        <name>isopentenyl diphosphate</name>
        <dbReference type="ChEBI" id="CHEBI:128769"/>
    </ligand>
</feature>
<feature type="binding site" evidence="1">
    <location>
        <position position="379"/>
    </location>
    <ligand>
        <name>(2E)-4-hydroxy-3-methylbut-2-enyl diphosphate</name>
        <dbReference type="ChEBI" id="CHEBI:128753"/>
    </ligand>
</feature>
<feature type="binding site" evidence="1">
    <location>
        <position position="379"/>
    </location>
    <ligand>
        <name>dimethylallyl diphosphate</name>
        <dbReference type="ChEBI" id="CHEBI:57623"/>
    </ligand>
</feature>
<feature type="binding site" evidence="1">
    <location>
        <position position="379"/>
    </location>
    <ligand>
        <name>isopentenyl diphosphate</name>
        <dbReference type="ChEBI" id="CHEBI:128769"/>
    </ligand>
</feature>